<comment type="function">
    <text evidence="1">RNA chaperone with significant RNA binding, RNA strand exchange and RNA duplexing activities. May regulate ProP activity through an RNA-based, post-transcriptional mechanism.</text>
</comment>
<comment type="subcellular location">
    <subcellularLocation>
        <location evidence="1">Cytoplasm</location>
    </subcellularLocation>
</comment>
<comment type="similarity">
    <text evidence="1">Belongs to the ProQ family.</text>
</comment>
<reference key="1">
    <citation type="submission" date="2007-08" db="EMBL/GenBank/DDBJ databases">
        <authorList>
            <consortium name="The Citrobacter koseri Genome Sequencing Project"/>
            <person name="McClelland M."/>
            <person name="Sanderson E.K."/>
            <person name="Porwollik S."/>
            <person name="Spieth J."/>
            <person name="Clifton W.S."/>
            <person name="Latreille P."/>
            <person name="Courtney L."/>
            <person name="Wang C."/>
            <person name="Pepin K."/>
            <person name="Bhonagiri V."/>
            <person name="Nash W."/>
            <person name="Johnson M."/>
            <person name="Thiruvilangam P."/>
            <person name="Wilson R."/>
        </authorList>
    </citation>
    <scope>NUCLEOTIDE SEQUENCE [LARGE SCALE GENOMIC DNA]</scope>
    <source>
        <strain>ATCC BAA-895 / CDC 4225-83 / SGSC4696</strain>
    </source>
</reference>
<gene>
    <name evidence="1" type="primary">proQ</name>
    <name type="ordered locus">CKO_01142</name>
</gene>
<protein>
    <recommendedName>
        <fullName evidence="1">RNA chaperone ProQ</fullName>
    </recommendedName>
</protein>
<organism>
    <name type="scientific">Citrobacter koseri (strain ATCC BAA-895 / CDC 4225-83 / SGSC4696)</name>
    <dbReference type="NCBI Taxonomy" id="290338"/>
    <lineage>
        <taxon>Bacteria</taxon>
        <taxon>Pseudomonadati</taxon>
        <taxon>Pseudomonadota</taxon>
        <taxon>Gammaproteobacteria</taxon>
        <taxon>Enterobacterales</taxon>
        <taxon>Enterobacteriaceae</taxon>
        <taxon>Citrobacter</taxon>
    </lineage>
</organism>
<feature type="chain" id="PRO_1000046555" description="RNA chaperone ProQ">
    <location>
        <begin position="1"/>
        <end position="228"/>
    </location>
</feature>
<feature type="region of interest" description="Disordered" evidence="2">
    <location>
        <begin position="105"/>
        <end position="178"/>
    </location>
</feature>
<feature type="compositionally biased region" description="Basic and acidic residues" evidence="2">
    <location>
        <begin position="117"/>
        <end position="136"/>
    </location>
</feature>
<feature type="compositionally biased region" description="Basic and acidic residues" evidence="2">
    <location>
        <begin position="146"/>
        <end position="173"/>
    </location>
</feature>
<name>PROQ_CITK8</name>
<keyword id="KW-0143">Chaperone</keyword>
<keyword id="KW-0963">Cytoplasm</keyword>
<keyword id="KW-1185">Reference proteome</keyword>
<keyword id="KW-0694">RNA-binding</keyword>
<evidence type="ECO:0000255" key="1">
    <source>
        <dbReference type="HAMAP-Rule" id="MF_00749"/>
    </source>
</evidence>
<evidence type="ECO:0000256" key="2">
    <source>
        <dbReference type="SAM" id="MobiDB-lite"/>
    </source>
</evidence>
<dbReference type="EMBL" id="CP000822">
    <property type="protein sequence ID" value="ABV12283.1"/>
    <property type="molecule type" value="Genomic_DNA"/>
</dbReference>
<dbReference type="RefSeq" id="WP_012132037.1">
    <property type="nucleotide sequence ID" value="NC_009792.1"/>
</dbReference>
<dbReference type="SMR" id="A8AFM0"/>
<dbReference type="STRING" id="290338.CKO_01142"/>
<dbReference type="GeneID" id="45135280"/>
<dbReference type="KEGG" id="cko:CKO_01142"/>
<dbReference type="HOGENOM" id="CLU_113254_0_0_6"/>
<dbReference type="OrthoDB" id="8421419at2"/>
<dbReference type="Proteomes" id="UP000008148">
    <property type="component" value="Chromosome"/>
</dbReference>
<dbReference type="GO" id="GO:0005829">
    <property type="term" value="C:cytosol"/>
    <property type="evidence" value="ECO:0007669"/>
    <property type="project" value="TreeGrafter"/>
</dbReference>
<dbReference type="GO" id="GO:0033592">
    <property type="term" value="F:RNA strand annealing activity"/>
    <property type="evidence" value="ECO:0007669"/>
    <property type="project" value="UniProtKB-UniRule"/>
</dbReference>
<dbReference type="GO" id="GO:0034057">
    <property type="term" value="F:RNA strand-exchange activity"/>
    <property type="evidence" value="ECO:0007669"/>
    <property type="project" value="UniProtKB-UniRule"/>
</dbReference>
<dbReference type="GO" id="GO:0010608">
    <property type="term" value="P:post-transcriptional regulation of gene expression"/>
    <property type="evidence" value="ECO:0007669"/>
    <property type="project" value="InterPro"/>
</dbReference>
<dbReference type="FunFam" id="1.10.1710.10:FF:000001">
    <property type="entry name" value="RNA chaperone ProQ"/>
    <property type="match status" value="1"/>
</dbReference>
<dbReference type="Gene3D" id="1.10.1710.10">
    <property type="entry name" value="ProQ/FinO domain"/>
    <property type="match status" value="1"/>
</dbReference>
<dbReference type="HAMAP" id="MF_00749">
    <property type="entry name" value="ProQ"/>
    <property type="match status" value="1"/>
</dbReference>
<dbReference type="InterPro" id="IPR023529">
    <property type="entry name" value="ProQ"/>
</dbReference>
<dbReference type="InterPro" id="IPR016103">
    <property type="entry name" value="ProQ/FinO"/>
</dbReference>
<dbReference type="InterPro" id="IPR036442">
    <property type="entry name" value="ProQ/FinO_sf"/>
</dbReference>
<dbReference type="InterPro" id="IPR035236">
    <property type="entry name" value="ProQ_C"/>
</dbReference>
<dbReference type="NCBIfam" id="NF003434">
    <property type="entry name" value="PRK04950.1"/>
    <property type="match status" value="1"/>
</dbReference>
<dbReference type="PANTHER" id="PTHR38106">
    <property type="entry name" value="RNA CHAPERONE PROQ"/>
    <property type="match status" value="1"/>
</dbReference>
<dbReference type="PANTHER" id="PTHR38106:SF1">
    <property type="entry name" value="RNA CHAPERONE PROQ"/>
    <property type="match status" value="1"/>
</dbReference>
<dbReference type="Pfam" id="PF04352">
    <property type="entry name" value="ProQ"/>
    <property type="match status" value="1"/>
</dbReference>
<dbReference type="Pfam" id="PF17516">
    <property type="entry name" value="ProQ_C"/>
    <property type="match status" value="1"/>
</dbReference>
<dbReference type="SMART" id="SM00945">
    <property type="entry name" value="ProQ"/>
    <property type="match status" value="1"/>
</dbReference>
<dbReference type="SUPFAM" id="SSF48657">
    <property type="entry name" value="FinO-like"/>
    <property type="match status" value="1"/>
</dbReference>
<sequence length="228" mass="25412">MENQPKLNSSKEVIAFLAERFPQCFSAEGEARPLKIGIFQDLVERVEGEMNLSKTQLRSALRLYTSSWRYLYGVKPGATRVDLDGNPCGELDEQHVEHARKQLEEAKARVQAQRAEQQAKKREAAAAAGEKEDAPRRERKPRPAPRRKETTPRTPRAEKPAAKAPRAPREEQHTPVSDISALTVGQSLKVKAGNNAMDATVLEVTKDGVRVQLNSGMSLIVRAEHLVF</sequence>
<proteinExistence type="inferred from homology"/>
<accession>A8AFM0</accession>